<feature type="signal peptide" evidence="1">
    <location>
        <begin position="1"/>
        <end position="29"/>
    </location>
</feature>
<feature type="chain" id="PRO_0000021260" description="Fibrinogen-binding protein">
    <location>
        <begin position="30"/>
        <end position="165"/>
    </location>
</feature>
<dbReference type="EMBL" id="BX571856">
    <property type="protein sequence ID" value="CAG40133.1"/>
    <property type="molecule type" value="Genomic_DNA"/>
</dbReference>
<dbReference type="RefSeq" id="WP_000791575.1">
    <property type="nucleotide sequence ID" value="NC_002952.2"/>
</dbReference>
<dbReference type="SMR" id="Q6GHS9"/>
<dbReference type="KEGG" id="sar:SAR1130"/>
<dbReference type="HOGENOM" id="CLU_136810_0_0_9"/>
<dbReference type="PRO" id="PR:Q6GHS9"/>
<dbReference type="Proteomes" id="UP000000596">
    <property type="component" value="Chromosome"/>
</dbReference>
<dbReference type="GO" id="GO:0005615">
    <property type="term" value="C:extracellular space"/>
    <property type="evidence" value="ECO:0007669"/>
    <property type="project" value="InterPro"/>
</dbReference>
<dbReference type="GO" id="GO:0001848">
    <property type="term" value="F:complement binding"/>
    <property type="evidence" value="ECO:0007669"/>
    <property type="project" value="InterPro"/>
</dbReference>
<dbReference type="Gene3D" id="1.10.10.1270">
    <property type="entry name" value="Sbi, C3 binding domain IV"/>
    <property type="match status" value="1"/>
</dbReference>
<dbReference type="InterPro" id="IPR036233">
    <property type="entry name" value="Efb_C_sf"/>
</dbReference>
<dbReference type="InterPro" id="IPR021033">
    <property type="entry name" value="Extracellular_fibrinogen-bd_C"/>
</dbReference>
<dbReference type="InterPro" id="IPR041909">
    <property type="entry name" value="Sbi_C3_db_domIV"/>
</dbReference>
<dbReference type="Pfam" id="PF12199">
    <property type="entry name" value="efb-c"/>
    <property type="match status" value="1"/>
</dbReference>
<dbReference type="SUPFAM" id="SSF158366">
    <property type="entry name" value="Efb C-domain-like"/>
    <property type="match status" value="1"/>
</dbReference>
<comment type="function">
    <text evidence="2">Extracellular fibrinogen-binding protein that plays an important role in virulence. By interacting with the alpha chain of fibrinogen and its derivative fibrin, enhances a non-functional interaction between fibrinogen and platelets and is responsible for repression of fibrinogen-dependent platelet aggregation. In addition, assembles a fibrinogen protective shield around the bacteria which results in impaired phagocytic clearance by the host. Mechanistically, interacts with host complement C3b deposited on the surface of the bacterium via its C-terminal and then recruits fibrinogen via its N-terminal.</text>
</comment>
<comment type="subunit">
    <text evidence="2">Interacts with host fibrinogen alpha chain/FGA. Interacts with host complement protein C3.</text>
</comment>
<comment type="subcellular location">
    <subcellularLocation>
        <location evidence="2">Secreted</location>
    </subcellularLocation>
</comment>
<accession>Q6GHS9</accession>
<name>FIB_STAAR</name>
<organism>
    <name type="scientific">Staphylococcus aureus (strain MRSA252)</name>
    <dbReference type="NCBI Taxonomy" id="282458"/>
    <lineage>
        <taxon>Bacteria</taxon>
        <taxon>Bacillati</taxon>
        <taxon>Bacillota</taxon>
        <taxon>Bacilli</taxon>
        <taxon>Bacillales</taxon>
        <taxon>Staphylococcaceae</taxon>
        <taxon>Staphylococcus</taxon>
    </lineage>
</organism>
<sequence length="165" mass="18835">MKNKLIAKSLLAIAAIGITTTTIASTADASEGYGPREKKPVSINHNIVEYNDGTFKYQSRPKFNTTPKYIKFRHDYNIVEYNDGTFEYGARPQFNKPAAKTEATIKKEQKLIQAQNLVREFEKTHTVSAHRKAQKAVNLVSFEYNVKKMILQERIDQVLKQGLVR</sequence>
<keyword id="KW-0964">Secreted</keyword>
<keyword id="KW-0732">Signal</keyword>
<keyword id="KW-0843">Virulence</keyword>
<gene>
    <name type="primary">fib</name>
    <name type="synonym">efb</name>
    <name type="ordered locus">SAR1130</name>
</gene>
<reference key="1">
    <citation type="journal article" date="2004" name="Proc. Natl. Acad. Sci. U.S.A.">
        <title>Complete genomes of two clinical Staphylococcus aureus strains: evidence for the rapid evolution of virulence and drug resistance.</title>
        <authorList>
            <person name="Holden M.T.G."/>
            <person name="Feil E.J."/>
            <person name="Lindsay J.A."/>
            <person name="Peacock S.J."/>
            <person name="Day N.P.J."/>
            <person name="Enright M.C."/>
            <person name="Foster T.J."/>
            <person name="Moore C.E."/>
            <person name="Hurst L."/>
            <person name="Atkin R."/>
            <person name="Barron A."/>
            <person name="Bason N."/>
            <person name="Bentley S.D."/>
            <person name="Chillingworth C."/>
            <person name="Chillingworth T."/>
            <person name="Churcher C."/>
            <person name="Clark L."/>
            <person name="Corton C."/>
            <person name="Cronin A."/>
            <person name="Doggett J."/>
            <person name="Dowd L."/>
            <person name="Feltwell T."/>
            <person name="Hance Z."/>
            <person name="Harris B."/>
            <person name="Hauser H."/>
            <person name="Holroyd S."/>
            <person name="Jagels K."/>
            <person name="James K.D."/>
            <person name="Lennard N."/>
            <person name="Line A."/>
            <person name="Mayes R."/>
            <person name="Moule S."/>
            <person name="Mungall K."/>
            <person name="Ormond D."/>
            <person name="Quail M.A."/>
            <person name="Rabbinowitsch E."/>
            <person name="Rutherford K.M."/>
            <person name="Sanders M."/>
            <person name="Sharp S."/>
            <person name="Simmonds M."/>
            <person name="Stevens K."/>
            <person name="Whitehead S."/>
            <person name="Barrell B.G."/>
            <person name="Spratt B.G."/>
            <person name="Parkhill J."/>
        </authorList>
    </citation>
    <scope>NUCLEOTIDE SEQUENCE [LARGE SCALE GENOMIC DNA]</scope>
    <source>
        <strain>MRSA252</strain>
    </source>
</reference>
<evidence type="ECO:0000250" key="1"/>
<evidence type="ECO:0000250" key="2">
    <source>
        <dbReference type="UniProtKB" id="A6QG59"/>
    </source>
</evidence>
<proteinExistence type="inferred from homology"/>
<protein>
    <recommendedName>
        <fullName>Fibrinogen-binding protein</fullName>
    </recommendedName>
</protein>